<organism>
    <name type="scientific">Pseudomonas putida (strain W619)</name>
    <dbReference type="NCBI Taxonomy" id="390235"/>
    <lineage>
        <taxon>Bacteria</taxon>
        <taxon>Pseudomonadati</taxon>
        <taxon>Pseudomonadota</taxon>
        <taxon>Gammaproteobacteria</taxon>
        <taxon>Pseudomonadales</taxon>
        <taxon>Pseudomonadaceae</taxon>
        <taxon>Pseudomonas</taxon>
    </lineage>
</organism>
<accession>B1JE55</accession>
<feature type="chain" id="PRO_0000381564" description="Biotin synthase">
    <location>
        <begin position="1"/>
        <end position="352"/>
    </location>
</feature>
<feature type="domain" description="Radical SAM core" evidence="2">
    <location>
        <begin position="44"/>
        <end position="262"/>
    </location>
</feature>
<feature type="binding site" evidence="1">
    <location>
        <position position="59"/>
    </location>
    <ligand>
        <name>[4Fe-4S] cluster</name>
        <dbReference type="ChEBI" id="CHEBI:49883"/>
        <note>4Fe-4S-S-AdoMet</note>
    </ligand>
</feature>
<feature type="binding site" evidence="1">
    <location>
        <position position="63"/>
    </location>
    <ligand>
        <name>[4Fe-4S] cluster</name>
        <dbReference type="ChEBI" id="CHEBI:49883"/>
        <note>4Fe-4S-S-AdoMet</note>
    </ligand>
</feature>
<feature type="binding site" evidence="1">
    <location>
        <position position="66"/>
    </location>
    <ligand>
        <name>[4Fe-4S] cluster</name>
        <dbReference type="ChEBI" id="CHEBI:49883"/>
        <note>4Fe-4S-S-AdoMet</note>
    </ligand>
</feature>
<feature type="binding site" evidence="1">
    <location>
        <position position="103"/>
    </location>
    <ligand>
        <name>[2Fe-2S] cluster</name>
        <dbReference type="ChEBI" id="CHEBI:190135"/>
    </ligand>
</feature>
<feature type="binding site" evidence="1">
    <location>
        <position position="134"/>
    </location>
    <ligand>
        <name>[2Fe-2S] cluster</name>
        <dbReference type="ChEBI" id="CHEBI:190135"/>
    </ligand>
</feature>
<feature type="binding site" evidence="1">
    <location>
        <position position="194"/>
    </location>
    <ligand>
        <name>[2Fe-2S] cluster</name>
        <dbReference type="ChEBI" id="CHEBI:190135"/>
    </ligand>
</feature>
<feature type="binding site" evidence="1">
    <location>
        <position position="266"/>
    </location>
    <ligand>
        <name>[2Fe-2S] cluster</name>
        <dbReference type="ChEBI" id="CHEBI:190135"/>
    </ligand>
</feature>
<proteinExistence type="inferred from homology"/>
<gene>
    <name evidence="1" type="primary">bioB</name>
    <name type="ordered locus">PputW619_4840</name>
</gene>
<evidence type="ECO:0000255" key="1">
    <source>
        <dbReference type="HAMAP-Rule" id="MF_01694"/>
    </source>
</evidence>
<evidence type="ECO:0000255" key="2">
    <source>
        <dbReference type="PROSITE-ProRule" id="PRU01266"/>
    </source>
</evidence>
<name>BIOB_PSEPW</name>
<protein>
    <recommendedName>
        <fullName evidence="1">Biotin synthase</fullName>
        <ecNumber evidence="1">2.8.1.6</ecNumber>
    </recommendedName>
</protein>
<keyword id="KW-0001">2Fe-2S</keyword>
<keyword id="KW-0004">4Fe-4S</keyword>
<keyword id="KW-0093">Biotin biosynthesis</keyword>
<keyword id="KW-0408">Iron</keyword>
<keyword id="KW-0411">Iron-sulfur</keyword>
<keyword id="KW-0479">Metal-binding</keyword>
<keyword id="KW-0949">S-adenosyl-L-methionine</keyword>
<keyword id="KW-0808">Transferase</keyword>
<dbReference type="EC" id="2.8.1.6" evidence="1"/>
<dbReference type="EMBL" id="CP000949">
    <property type="protein sequence ID" value="ACA75316.1"/>
    <property type="molecule type" value="Genomic_DNA"/>
</dbReference>
<dbReference type="SMR" id="B1JE55"/>
<dbReference type="STRING" id="390235.PputW619_4840"/>
<dbReference type="KEGG" id="ppw:PputW619_4840"/>
<dbReference type="eggNOG" id="COG0502">
    <property type="taxonomic scope" value="Bacteria"/>
</dbReference>
<dbReference type="HOGENOM" id="CLU_033172_1_2_6"/>
<dbReference type="OrthoDB" id="9786826at2"/>
<dbReference type="UniPathway" id="UPA00078">
    <property type="reaction ID" value="UER00162"/>
</dbReference>
<dbReference type="GO" id="GO:0051537">
    <property type="term" value="F:2 iron, 2 sulfur cluster binding"/>
    <property type="evidence" value="ECO:0007669"/>
    <property type="project" value="UniProtKB-KW"/>
</dbReference>
<dbReference type="GO" id="GO:0051539">
    <property type="term" value="F:4 iron, 4 sulfur cluster binding"/>
    <property type="evidence" value="ECO:0007669"/>
    <property type="project" value="UniProtKB-KW"/>
</dbReference>
<dbReference type="GO" id="GO:0004076">
    <property type="term" value="F:biotin synthase activity"/>
    <property type="evidence" value="ECO:0007669"/>
    <property type="project" value="UniProtKB-UniRule"/>
</dbReference>
<dbReference type="GO" id="GO:0005506">
    <property type="term" value="F:iron ion binding"/>
    <property type="evidence" value="ECO:0007669"/>
    <property type="project" value="UniProtKB-UniRule"/>
</dbReference>
<dbReference type="GO" id="GO:0009102">
    <property type="term" value="P:biotin biosynthetic process"/>
    <property type="evidence" value="ECO:0007669"/>
    <property type="project" value="UniProtKB-UniRule"/>
</dbReference>
<dbReference type="CDD" id="cd01335">
    <property type="entry name" value="Radical_SAM"/>
    <property type="match status" value="1"/>
</dbReference>
<dbReference type="FunFam" id="3.20.20.70:FF:000011">
    <property type="entry name" value="Biotin synthase"/>
    <property type="match status" value="1"/>
</dbReference>
<dbReference type="Gene3D" id="3.20.20.70">
    <property type="entry name" value="Aldolase class I"/>
    <property type="match status" value="1"/>
</dbReference>
<dbReference type="HAMAP" id="MF_01694">
    <property type="entry name" value="BioB"/>
    <property type="match status" value="1"/>
</dbReference>
<dbReference type="InterPro" id="IPR013785">
    <property type="entry name" value="Aldolase_TIM"/>
</dbReference>
<dbReference type="InterPro" id="IPR010722">
    <property type="entry name" value="BATS_dom"/>
</dbReference>
<dbReference type="InterPro" id="IPR002684">
    <property type="entry name" value="Biotin_synth/BioAB"/>
</dbReference>
<dbReference type="InterPro" id="IPR024177">
    <property type="entry name" value="Biotin_synthase"/>
</dbReference>
<dbReference type="InterPro" id="IPR006638">
    <property type="entry name" value="Elp3/MiaA/NifB-like_rSAM"/>
</dbReference>
<dbReference type="InterPro" id="IPR007197">
    <property type="entry name" value="rSAM"/>
</dbReference>
<dbReference type="NCBIfam" id="TIGR00433">
    <property type="entry name" value="bioB"/>
    <property type="match status" value="1"/>
</dbReference>
<dbReference type="PANTHER" id="PTHR22976">
    <property type="entry name" value="BIOTIN SYNTHASE"/>
    <property type="match status" value="1"/>
</dbReference>
<dbReference type="PANTHER" id="PTHR22976:SF2">
    <property type="entry name" value="BIOTIN SYNTHASE, MITOCHONDRIAL"/>
    <property type="match status" value="1"/>
</dbReference>
<dbReference type="Pfam" id="PF06968">
    <property type="entry name" value="BATS"/>
    <property type="match status" value="1"/>
</dbReference>
<dbReference type="Pfam" id="PF04055">
    <property type="entry name" value="Radical_SAM"/>
    <property type="match status" value="1"/>
</dbReference>
<dbReference type="PIRSF" id="PIRSF001619">
    <property type="entry name" value="Biotin_synth"/>
    <property type="match status" value="1"/>
</dbReference>
<dbReference type="SFLD" id="SFLDG01060">
    <property type="entry name" value="BATS_domain_containing"/>
    <property type="match status" value="1"/>
</dbReference>
<dbReference type="SFLD" id="SFLDF00272">
    <property type="entry name" value="biotin_synthase"/>
    <property type="match status" value="1"/>
</dbReference>
<dbReference type="SMART" id="SM00876">
    <property type="entry name" value="BATS"/>
    <property type="match status" value="1"/>
</dbReference>
<dbReference type="SMART" id="SM00729">
    <property type="entry name" value="Elp3"/>
    <property type="match status" value="1"/>
</dbReference>
<dbReference type="SUPFAM" id="SSF102114">
    <property type="entry name" value="Radical SAM enzymes"/>
    <property type="match status" value="1"/>
</dbReference>
<dbReference type="PROSITE" id="PS51918">
    <property type="entry name" value="RADICAL_SAM"/>
    <property type="match status" value="1"/>
</dbReference>
<comment type="function">
    <text evidence="1">Catalyzes the conversion of dethiobiotin (DTB) to biotin by the insertion of a sulfur atom into dethiobiotin via a radical-based mechanism.</text>
</comment>
<comment type="catalytic activity">
    <reaction evidence="1">
        <text>(4R,5S)-dethiobiotin + (sulfur carrier)-SH + 2 reduced [2Fe-2S]-[ferredoxin] + 2 S-adenosyl-L-methionine = (sulfur carrier)-H + biotin + 2 5'-deoxyadenosine + 2 L-methionine + 2 oxidized [2Fe-2S]-[ferredoxin]</text>
        <dbReference type="Rhea" id="RHEA:22060"/>
        <dbReference type="Rhea" id="RHEA-COMP:10000"/>
        <dbReference type="Rhea" id="RHEA-COMP:10001"/>
        <dbReference type="Rhea" id="RHEA-COMP:14737"/>
        <dbReference type="Rhea" id="RHEA-COMP:14739"/>
        <dbReference type="ChEBI" id="CHEBI:17319"/>
        <dbReference type="ChEBI" id="CHEBI:29917"/>
        <dbReference type="ChEBI" id="CHEBI:33737"/>
        <dbReference type="ChEBI" id="CHEBI:33738"/>
        <dbReference type="ChEBI" id="CHEBI:57586"/>
        <dbReference type="ChEBI" id="CHEBI:57844"/>
        <dbReference type="ChEBI" id="CHEBI:59789"/>
        <dbReference type="ChEBI" id="CHEBI:64428"/>
        <dbReference type="ChEBI" id="CHEBI:149473"/>
        <dbReference type="EC" id="2.8.1.6"/>
    </reaction>
</comment>
<comment type="cofactor">
    <cofactor evidence="1">
        <name>[4Fe-4S] cluster</name>
        <dbReference type="ChEBI" id="CHEBI:49883"/>
    </cofactor>
    <text evidence="1">Binds 1 [4Fe-4S] cluster. The cluster is coordinated with 3 cysteines and an exchangeable S-adenosyl-L-methionine.</text>
</comment>
<comment type="cofactor">
    <cofactor evidence="1">
        <name>[2Fe-2S] cluster</name>
        <dbReference type="ChEBI" id="CHEBI:190135"/>
    </cofactor>
    <text evidence="1">Binds 1 [2Fe-2S] cluster. The cluster is coordinated with 3 cysteines and 1 arginine.</text>
</comment>
<comment type="pathway">
    <text evidence="1">Cofactor biosynthesis; biotin biosynthesis; biotin from 7,8-diaminononanoate: step 2/2.</text>
</comment>
<comment type="subunit">
    <text evidence="1">Homodimer.</text>
</comment>
<comment type="similarity">
    <text evidence="1">Belongs to the radical SAM superfamily. Biotin synthase family.</text>
</comment>
<reference key="1">
    <citation type="submission" date="2008-02" db="EMBL/GenBank/DDBJ databases">
        <title>Complete sequence of Pseudomonas putida W619.</title>
        <authorList>
            <person name="Copeland A."/>
            <person name="Lucas S."/>
            <person name="Lapidus A."/>
            <person name="Barry K."/>
            <person name="Detter J.C."/>
            <person name="Glavina del Rio T."/>
            <person name="Dalin E."/>
            <person name="Tice H."/>
            <person name="Pitluck S."/>
            <person name="Chain P."/>
            <person name="Malfatti S."/>
            <person name="Shin M."/>
            <person name="Vergez L."/>
            <person name="Schmutz J."/>
            <person name="Larimer F."/>
            <person name="Land M."/>
            <person name="Hauser L."/>
            <person name="Kyrpides N."/>
            <person name="Kim E."/>
            <person name="Taghavi S."/>
            <person name="Vangronsveld D."/>
            <person name="van der Lelie D."/>
            <person name="Richardson P."/>
        </authorList>
    </citation>
    <scope>NUCLEOTIDE SEQUENCE [LARGE SCALE GENOMIC DNA]</scope>
    <source>
        <strain>W619</strain>
    </source>
</reference>
<sequence>MSASTTATTRHDWSLAEVKALFQLPFNDLLFQAQTVHRAHFDPNRVQVSTLLSIKTGACPEDCKYCPQSGHYNTGLEKQKLMEVQKVLEEAARAKAIGSTRFCMGAAWKHPSAKDMPYVLEMVKGVKAMGLETCMTLGKLDQDQTQALAQAGLDYYNHNLDTSPEFYGSIITTRTYSERLQTLAYVRDAGMKICSGGILGMGESLDDRAGLLIQLANLPEHPESVPINMLVKVAGTPLAEEEDVDPFDFIRMLAVARLLMPKSHVRLSAGREQMNEQMQALAFMAGANSIFYGEKLLTTANPQADKDMQLFARLGIKPEAREEHADEVHQAAIEQALVEQRSSELFYNAASA</sequence>